<feature type="transit peptide" description="Chloroplast" evidence="3">
    <location>
        <begin position="1"/>
        <end position="39"/>
    </location>
</feature>
<feature type="chain" id="PRO_0000348420" description="S-(+)-linalool synthase, chloroplastic">
    <location>
        <begin position="40"/>
        <end position="569"/>
    </location>
</feature>
<feature type="short sequence motif" description="DDXXD motif" evidence="2">
    <location>
        <begin position="331"/>
        <end position="335"/>
    </location>
</feature>
<feature type="binding site" evidence="2">
    <location>
        <position position="294"/>
    </location>
    <ligand>
        <name>(2E)-geranyl diphosphate</name>
        <dbReference type="ChEBI" id="CHEBI:58057"/>
    </ligand>
</feature>
<feature type="binding site" evidence="2">
    <location>
        <position position="331"/>
    </location>
    <ligand>
        <name>(2E)-geranyl diphosphate</name>
        <dbReference type="ChEBI" id="CHEBI:58057"/>
    </ligand>
</feature>
<feature type="binding site" evidence="2">
    <location>
        <position position="331"/>
    </location>
    <ligand>
        <name>Mg(2+)</name>
        <dbReference type="ChEBI" id="CHEBI:18420"/>
        <label>1</label>
    </ligand>
</feature>
<feature type="binding site" evidence="2">
    <location>
        <position position="331"/>
    </location>
    <ligand>
        <name>Mg(2+)</name>
        <dbReference type="ChEBI" id="CHEBI:18420"/>
        <label>2</label>
    </ligand>
</feature>
<feature type="binding site" evidence="2">
    <location>
        <position position="335"/>
    </location>
    <ligand>
        <name>(2E)-geranyl diphosphate</name>
        <dbReference type="ChEBI" id="CHEBI:58057"/>
    </ligand>
</feature>
<feature type="binding site" evidence="2">
    <location>
        <position position="335"/>
    </location>
    <ligand>
        <name>Mg(2+)</name>
        <dbReference type="ChEBI" id="CHEBI:18420"/>
        <label>1</label>
    </ligand>
</feature>
<feature type="binding site" evidence="2">
    <location>
        <position position="335"/>
    </location>
    <ligand>
        <name>Mg(2+)</name>
        <dbReference type="ChEBI" id="CHEBI:18420"/>
        <label>2</label>
    </ligand>
</feature>
<feature type="binding site" evidence="2">
    <location>
        <position position="472"/>
    </location>
    <ligand>
        <name>(2E)-geranyl diphosphate</name>
        <dbReference type="ChEBI" id="CHEBI:58057"/>
    </ligand>
</feature>
<feature type="binding site" evidence="2">
    <location>
        <position position="475"/>
    </location>
    <ligand>
        <name>(2E)-geranyl diphosphate</name>
        <dbReference type="ChEBI" id="CHEBI:58057"/>
    </ligand>
</feature>
<feature type="binding site" evidence="2">
    <location>
        <position position="475"/>
    </location>
    <ligand>
        <name>Mg(2+)</name>
        <dbReference type="ChEBI" id="CHEBI:18420"/>
        <label>3</label>
    </ligand>
</feature>
<feature type="binding site" evidence="2">
    <location>
        <position position="479"/>
    </location>
    <ligand>
        <name>Mg(2+)</name>
        <dbReference type="ChEBI" id="CHEBI:18420"/>
        <label>3</label>
    </ligand>
</feature>
<feature type="binding site" evidence="2">
    <location>
        <position position="483"/>
    </location>
    <ligand>
        <name>Mg(2+)</name>
        <dbReference type="ChEBI" id="CHEBI:18420"/>
        <label>3</label>
    </ligand>
</feature>
<feature type="sequence conflict" description="In Ref. 1; AAO85533." evidence="6" ref="1">
    <original>L</original>
    <variation>S</variation>
    <location>
        <position position="71"/>
    </location>
</feature>
<feature type="sequence conflict" description="In Ref. 1; AAO85533." evidence="6" ref="1">
    <original>I</original>
    <variation>T</variation>
    <location>
        <position position="105"/>
    </location>
</feature>
<feature type="sequence conflict" description="In Ref. 1; AAO85533." evidence="6" ref="1">
    <original>E</original>
    <variation>G</variation>
    <location>
        <position position="112"/>
    </location>
</feature>
<feature type="sequence conflict" description="In Ref. 1; AAO85533." evidence="6" ref="1">
    <original>I</original>
    <variation>S</variation>
    <location>
        <position position="151"/>
    </location>
</feature>
<organism>
    <name type="scientific">Arabidopsis thaliana</name>
    <name type="common">Mouse-ear cress</name>
    <dbReference type="NCBI Taxonomy" id="3702"/>
    <lineage>
        <taxon>Eukaryota</taxon>
        <taxon>Viridiplantae</taxon>
        <taxon>Streptophyta</taxon>
        <taxon>Embryophyta</taxon>
        <taxon>Tracheophyta</taxon>
        <taxon>Spermatophyta</taxon>
        <taxon>Magnoliopsida</taxon>
        <taxon>eudicotyledons</taxon>
        <taxon>Gunneridae</taxon>
        <taxon>Pentapetalae</taxon>
        <taxon>rosids</taxon>
        <taxon>malvids</taxon>
        <taxon>Brassicales</taxon>
        <taxon>Brassicaceae</taxon>
        <taxon>Camelineae</taxon>
        <taxon>Arabidopsis</taxon>
    </lineage>
</organism>
<evidence type="ECO:0000250" key="1">
    <source>
        <dbReference type="UniProtKB" id="A0A1C9J6A7"/>
    </source>
</evidence>
<evidence type="ECO:0000250" key="2">
    <source>
        <dbReference type="UniProtKB" id="Q40577"/>
    </source>
</evidence>
<evidence type="ECO:0000255" key="3"/>
<evidence type="ECO:0000269" key="4">
    <source>
    </source>
</evidence>
<evidence type="ECO:0000303" key="5">
    <source>
    </source>
</evidence>
<evidence type="ECO:0000305" key="6"/>
<evidence type="ECO:0000305" key="7">
    <source>
    </source>
</evidence>
<evidence type="ECO:0000312" key="8">
    <source>
        <dbReference type="Araport" id="AT1G61680"/>
    </source>
</evidence>
<evidence type="ECO:0000312" key="9">
    <source>
        <dbReference type="EMBL" id="AAD21414.1"/>
    </source>
</evidence>
<name>LINS_ARATH</name>
<proteinExistence type="evidence at protein level"/>
<accession>Q84UV0</accession>
<accession>Q9SYA3</accession>
<protein>
    <recommendedName>
        <fullName>S-(+)-linalool synthase, chloroplastic</fullName>
        <ecNumber evidence="4">4.2.3.25</ecNumber>
    </recommendedName>
    <alternativeName>
        <fullName evidence="5">Terpenoid synthase 14</fullName>
        <shortName evidence="5">AtTPS14</shortName>
    </alternativeName>
</protein>
<keyword id="KW-0025">Alternative splicing</keyword>
<keyword id="KW-0150">Chloroplast</keyword>
<keyword id="KW-0456">Lyase</keyword>
<keyword id="KW-0460">Magnesium</keyword>
<keyword id="KW-0464">Manganese</keyword>
<keyword id="KW-0479">Metal-binding</keyword>
<keyword id="KW-0934">Plastid</keyword>
<keyword id="KW-1185">Reference proteome</keyword>
<keyword id="KW-0809">Transit peptide</keyword>
<reference key="1">
    <citation type="journal article" date="2003" name="Plant Cell">
        <title>Biosynthesis and emission of terpenoid volatiles from Arabidopsis flowers.</title>
        <authorList>
            <person name="Chen F."/>
            <person name="Tholl D."/>
            <person name="D'Auria J.C."/>
            <person name="Farooq A."/>
            <person name="Pichersky E."/>
            <person name="Gershenzon J."/>
        </authorList>
    </citation>
    <scope>NUCLEOTIDE SEQUENCE [MRNA]</scope>
    <scope>FUNCTION</scope>
    <scope>CATALYTIC ACTIVITY</scope>
    <scope>TISSUE SPECIFICITY</scope>
    <source>
        <strain>cv. Landsberg erecta</strain>
    </source>
</reference>
<reference key="2">
    <citation type="journal article" date="2000" name="Nature">
        <title>Sequence and analysis of chromosome 1 of the plant Arabidopsis thaliana.</title>
        <authorList>
            <person name="Theologis A."/>
            <person name="Ecker J.R."/>
            <person name="Palm C.J."/>
            <person name="Federspiel N.A."/>
            <person name="Kaul S."/>
            <person name="White O."/>
            <person name="Alonso J."/>
            <person name="Altafi H."/>
            <person name="Araujo R."/>
            <person name="Bowman C.L."/>
            <person name="Brooks S.Y."/>
            <person name="Buehler E."/>
            <person name="Chan A."/>
            <person name="Chao Q."/>
            <person name="Chen H."/>
            <person name="Cheuk R.F."/>
            <person name="Chin C.W."/>
            <person name="Chung M.K."/>
            <person name="Conn L."/>
            <person name="Conway A.B."/>
            <person name="Conway A.R."/>
            <person name="Creasy T.H."/>
            <person name="Dewar K."/>
            <person name="Dunn P."/>
            <person name="Etgu P."/>
            <person name="Feldblyum T.V."/>
            <person name="Feng J.-D."/>
            <person name="Fong B."/>
            <person name="Fujii C.Y."/>
            <person name="Gill J.E."/>
            <person name="Goldsmith A.D."/>
            <person name="Haas B."/>
            <person name="Hansen N.F."/>
            <person name="Hughes B."/>
            <person name="Huizar L."/>
            <person name="Hunter J.L."/>
            <person name="Jenkins J."/>
            <person name="Johnson-Hopson C."/>
            <person name="Khan S."/>
            <person name="Khaykin E."/>
            <person name="Kim C.J."/>
            <person name="Koo H.L."/>
            <person name="Kremenetskaia I."/>
            <person name="Kurtz D.B."/>
            <person name="Kwan A."/>
            <person name="Lam B."/>
            <person name="Langin-Hooper S."/>
            <person name="Lee A."/>
            <person name="Lee J.M."/>
            <person name="Lenz C.A."/>
            <person name="Li J.H."/>
            <person name="Li Y.-P."/>
            <person name="Lin X."/>
            <person name="Liu S.X."/>
            <person name="Liu Z.A."/>
            <person name="Luros J.S."/>
            <person name="Maiti R."/>
            <person name="Marziali A."/>
            <person name="Militscher J."/>
            <person name="Miranda M."/>
            <person name="Nguyen M."/>
            <person name="Nierman W.C."/>
            <person name="Osborne B.I."/>
            <person name="Pai G."/>
            <person name="Peterson J."/>
            <person name="Pham P.K."/>
            <person name="Rizzo M."/>
            <person name="Rooney T."/>
            <person name="Rowley D."/>
            <person name="Sakano H."/>
            <person name="Salzberg S.L."/>
            <person name="Schwartz J.R."/>
            <person name="Shinn P."/>
            <person name="Southwick A.M."/>
            <person name="Sun H."/>
            <person name="Tallon L.J."/>
            <person name="Tambunga G."/>
            <person name="Toriumi M.J."/>
            <person name="Town C.D."/>
            <person name="Utterback T."/>
            <person name="Van Aken S."/>
            <person name="Vaysberg M."/>
            <person name="Vysotskaia V.S."/>
            <person name="Walker M."/>
            <person name="Wu D."/>
            <person name="Yu G."/>
            <person name="Fraser C.M."/>
            <person name="Venter J.C."/>
            <person name="Davis R.W."/>
        </authorList>
    </citation>
    <scope>NUCLEOTIDE SEQUENCE [LARGE SCALE GENOMIC DNA]</scope>
    <source>
        <strain>cv. Columbia</strain>
    </source>
</reference>
<reference key="3">
    <citation type="journal article" date="2017" name="Plant J.">
        <title>Araport11: a complete reannotation of the Arabidopsis thaliana reference genome.</title>
        <authorList>
            <person name="Cheng C.Y."/>
            <person name="Krishnakumar V."/>
            <person name="Chan A.P."/>
            <person name="Thibaud-Nissen F."/>
            <person name="Schobel S."/>
            <person name="Town C.D."/>
        </authorList>
    </citation>
    <scope>GENOME REANNOTATION</scope>
    <source>
        <strain>cv. Columbia</strain>
    </source>
</reference>
<reference key="4">
    <citation type="journal article" date="2002" name="Mol. Genet. Genomics">
        <title>Genomic analysis of the terpenoid synthase (AtTPS) gene family of Arabidopsis thaliana.</title>
        <authorList>
            <person name="Aubourg S."/>
            <person name="Lecharny A."/>
            <person name="Bohlmann J."/>
        </authorList>
    </citation>
    <scope>GENE FAMILY</scope>
    <scope>NOMENCLATURE</scope>
</reference>
<reference key="5">
    <citation type="journal article" date="2003" name="Plant Mol. Biol.">
        <title>Genome organization in Arabidopsis thaliana: a survey for genes involved in isoprenoid and chlorophyll metabolism.</title>
        <authorList>
            <person name="Lange B.M."/>
            <person name="Ghassemian M."/>
        </authorList>
    </citation>
    <scope>GENE FAMILY</scope>
</reference>
<sequence length="569" mass="65401">MALIATKISSRSCFVSAYPNNSPTFLISKFPNTVDSLSPANTAKRSILRNVHASVSNPSKQFHNKTSLEYLHELNIKKIKNILSANVDVPSENLEMIDVIQSLGIDLHFRQEIEQTLHMIYKEGLQFNGDLHEIALRFRLLRQEGHYVQEIIFKNILDKKGGFKDVVKNDVKGLTELFEASELRVEGEETLDGAREFTYSRLNELCSGRESHQKQEIMKSLAQPRHKTVRGLTSKRFTSMIKIAGQEDPEWLQSLLRVAEIDSIRLKSLTQGEMSQTFKWWTELGLEKDVEKARSQPLKWHTWSMKILQDPTLTEQRLDLTKPISLVYVIDDIFDVYGELEELTIFTRVVERWDHKGLKTLPKYMRVCFEALDMITTEISMKIYKSHGWNPTYALRQSWASLCKAFLVEAKWFNSGYLPTTEEYMKNGVVSSGVHLVMLHAYILLGEELTKEKVELIESNPGIVSSAATILRLWDDLGSAKDENQDGTDGSYVECYLNEYKGSTVDEARTHVAQKISRAWKRLNRECLNPCPFSRSFSKACLNIARTVPLMYSYDDDQRLPDEYLKSLM</sequence>
<comment type="function">
    <text evidence="4">Involved in monoterpene (C10) biosynthesis. The major product is (S)-linalool.</text>
</comment>
<comment type="catalytic activity">
    <reaction evidence="4">
        <text>(2E)-geranyl diphosphate + H2O = (S)-linalool + diphosphate</text>
        <dbReference type="Rhea" id="RHEA:24116"/>
        <dbReference type="ChEBI" id="CHEBI:98"/>
        <dbReference type="ChEBI" id="CHEBI:15377"/>
        <dbReference type="ChEBI" id="CHEBI:33019"/>
        <dbReference type="ChEBI" id="CHEBI:58057"/>
        <dbReference type="EC" id="4.2.3.25"/>
    </reaction>
    <physiologicalReaction direction="left-to-right" evidence="7">
        <dbReference type="Rhea" id="RHEA:24117"/>
    </physiologicalReaction>
</comment>
<comment type="cofactor">
    <cofactor evidence="1">
        <name>Mg(2+)</name>
        <dbReference type="ChEBI" id="CHEBI:18420"/>
    </cofactor>
    <cofactor evidence="1">
        <name>Mn(2+)</name>
        <dbReference type="ChEBI" id="CHEBI:29035"/>
    </cofactor>
    <text evidence="1">Binds 3 Mg(2+) or Mn(2+) ions per subunit.</text>
</comment>
<comment type="pathway">
    <text>Secondary metabolite biosynthesis; terpenoid biosynthesis.</text>
</comment>
<comment type="subcellular location">
    <subcellularLocation>
        <location evidence="3">Plastid</location>
        <location evidence="3">Chloroplast</location>
    </subcellularLocation>
</comment>
<comment type="alternative products">
    <event type="alternative splicing"/>
    <isoform>
        <id>Q84UV0-1</id>
        <name>1</name>
        <sequence type="displayed"/>
    </isoform>
    <text>A number of isoforms are produced. According to EST sequences.</text>
</comment>
<comment type="tissue specificity">
    <text evidence="4">Predominantly expressed in flowers but also in stems and siliques.</text>
</comment>
<comment type="domain">
    <text evidence="2">The Asp-Asp-Xaa-Xaa-Asp/Glu (DDXXD/E) motif is important for the catalytic activity, presumably through binding to Mg(2+).</text>
</comment>
<comment type="similarity">
    <text evidence="6">Belongs to the terpene synthase family. Tpsb subfamily.</text>
</comment>
<comment type="sequence caution" evidence="6">
    <conflict type="erroneous gene model prediction">
        <sequence resource="EMBL-CDS" id="AAD21414"/>
    </conflict>
</comment>
<dbReference type="EC" id="4.2.3.25" evidence="4"/>
<dbReference type="EMBL" id="AF497485">
    <property type="protein sequence ID" value="AAO85533.1"/>
    <property type="molecule type" value="mRNA"/>
</dbReference>
<dbReference type="EMBL" id="AC005882">
    <property type="protein sequence ID" value="AAD21414.1"/>
    <property type="status" value="ALT_SEQ"/>
    <property type="molecule type" value="Genomic_DNA"/>
</dbReference>
<dbReference type="EMBL" id="CP002684">
    <property type="protein sequence ID" value="AEE33873.1"/>
    <property type="molecule type" value="Genomic_DNA"/>
</dbReference>
<dbReference type="PIR" id="C96642">
    <property type="entry name" value="C96642"/>
</dbReference>
<dbReference type="RefSeq" id="NP_176361.2">
    <molecule id="Q84UV0-1"/>
    <property type="nucleotide sequence ID" value="NM_104850.2"/>
</dbReference>
<dbReference type="SMR" id="Q84UV0"/>
<dbReference type="FunCoup" id="Q84UV0">
    <property type="interactions" value="23"/>
</dbReference>
<dbReference type="STRING" id="3702.Q84UV0"/>
<dbReference type="iPTMnet" id="Q84UV0"/>
<dbReference type="PaxDb" id="3702-AT1G61680.1"/>
<dbReference type="ProteomicsDB" id="238606">
    <molecule id="Q84UV0-1"/>
</dbReference>
<dbReference type="EnsemblPlants" id="AT1G61680.1">
    <molecule id="Q84UV0-1"/>
    <property type="protein sequence ID" value="AT1G61680.1"/>
    <property type="gene ID" value="AT1G61680"/>
</dbReference>
<dbReference type="GeneID" id="842465"/>
<dbReference type="Gramene" id="AT1G61680.1">
    <molecule id="Q84UV0-1"/>
    <property type="protein sequence ID" value="AT1G61680.1"/>
    <property type="gene ID" value="AT1G61680"/>
</dbReference>
<dbReference type="KEGG" id="ath:AT1G61680"/>
<dbReference type="Araport" id="AT1G61680"/>
<dbReference type="TAIR" id="AT1G61680">
    <property type="gene designation" value="TPS14"/>
</dbReference>
<dbReference type="eggNOG" id="ENOG502QTGK">
    <property type="taxonomic scope" value="Eukaryota"/>
</dbReference>
<dbReference type="InParanoid" id="Q84UV0"/>
<dbReference type="OMA" id="MMTAIQG"/>
<dbReference type="PhylomeDB" id="Q84UV0"/>
<dbReference type="BioCyc" id="ARA:AT1G61680-MONOMER"/>
<dbReference type="UniPathway" id="UPA00213"/>
<dbReference type="PRO" id="PR:Q84UV0"/>
<dbReference type="Proteomes" id="UP000006548">
    <property type="component" value="Chromosome 1"/>
</dbReference>
<dbReference type="ExpressionAtlas" id="Q84UV0">
    <property type="expression patterns" value="baseline and differential"/>
</dbReference>
<dbReference type="GO" id="GO:0009507">
    <property type="term" value="C:chloroplast"/>
    <property type="evidence" value="ECO:0007669"/>
    <property type="project" value="UniProtKB-SubCell"/>
</dbReference>
<dbReference type="GO" id="GO:0000287">
    <property type="term" value="F:magnesium ion binding"/>
    <property type="evidence" value="ECO:0007669"/>
    <property type="project" value="InterPro"/>
</dbReference>
<dbReference type="GO" id="GO:0034007">
    <property type="term" value="F:S-linalool synthase activity"/>
    <property type="evidence" value="ECO:0000314"/>
    <property type="project" value="TAIR"/>
</dbReference>
<dbReference type="GO" id="GO:0010333">
    <property type="term" value="F:terpene synthase activity"/>
    <property type="evidence" value="ECO:0007669"/>
    <property type="project" value="InterPro"/>
</dbReference>
<dbReference type="GO" id="GO:0043693">
    <property type="term" value="P:monoterpene biosynthetic process"/>
    <property type="evidence" value="ECO:0000314"/>
    <property type="project" value="TAIR"/>
</dbReference>
<dbReference type="GO" id="GO:0016114">
    <property type="term" value="P:terpenoid biosynthetic process"/>
    <property type="evidence" value="ECO:0007669"/>
    <property type="project" value="UniProtKB-UniPathway"/>
</dbReference>
<dbReference type="FunFam" id="1.10.600.10:FF:000005">
    <property type="entry name" value="Ent-kaur-16-ene synthase, chloroplastic"/>
    <property type="match status" value="1"/>
</dbReference>
<dbReference type="Gene3D" id="1.10.600.10">
    <property type="entry name" value="Farnesyl Diphosphate Synthase"/>
    <property type="match status" value="1"/>
</dbReference>
<dbReference type="Gene3D" id="1.50.10.130">
    <property type="entry name" value="Terpene synthase, N-terminal domain"/>
    <property type="match status" value="1"/>
</dbReference>
<dbReference type="InterPro" id="IPR008949">
    <property type="entry name" value="Isoprenoid_synthase_dom_sf"/>
</dbReference>
<dbReference type="InterPro" id="IPR034741">
    <property type="entry name" value="Terpene_cyclase-like_1_C"/>
</dbReference>
<dbReference type="InterPro" id="IPR001906">
    <property type="entry name" value="Terpene_synth_N"/>
</dbReference>
<dbReference type="InterPro" id="IPR036965">
    <property type="entry name" value="Terpene_synth_N_sf"/>
</dbReference>
<dbReference type="InterPro" id="IPR050148">
    <property type="entry name" value="Terpene_synthase-like"/>
</dbReference>
<dbReference type="InterPro" id="IPR005630">
    <property type="entry name" value="Terpene_synthase_metal-bd"/>
</dbReference>
<dbReference type="InterPro" id="IPR008930">
    <property type="entry name" value="Terpenoid_cyclase/PrenylTrfase"/>
</dbReference>
<dbReference type="PANTHER" id="PTHR31225">
    <property type="entry name" value="OS04G0344100 PROTEIN-RELATED"/>
    <property type="match status" value="1"/>
</dbReference>
<dbReference type="PANTHER" id="PTHR31225:SF0">
    <property type="entry name" value="S-(+)-LINALOOL SYNTHASE, CHLOROPLASTIC"/>
    <property type="match status" value="1"/>
</dbReference>
<dbReference type="Pfam" id="PF01397">
    <property type="entry name" value="Terpene_synth"/>
    <property type="match status" value="1"/>
</dbReference>
<dbReference type="Pfam" id="PF03936">
    <property type="entry name" value="Terpene_synth_C"/>
    <property type="match status" value="1"/>
</dbReference>
<dbReference type="SFLD" id="SFLDS00005">
    <property type="entry name" value="Isoprenoid_Synthase_Type_I"/>
    <property type="match status" value="1"/>
</dbReference>
<dbReference type="SFLD" id="SFLDG01019">
    <property type="entry name" value="Terpene_Cyclase_Like_1_C_Termi"/>
    <property type="match status" value="1"/>
</dbReference>
<dbReference type="SUPFAM" id="SSF48239">
    <property type="entry name" value="Terpenoid cyclases/Protein prenyltransferases"/>
    <property type="match status" value="1"/>
</dbReference>
<dbReference type="SUPFAM" id="SSF48576">
    <property type="entry name" value="Terpenoid synthases"/>
    <property type="match status" value="1"/>
</dbReference>
<gene>
    <name evidence="5" type="primary">TPS14</name>
    <name evidence="8" type="ordered locus">At1g61680</name>
    <name evidence="9" type="ORF">T13M11.3</name>
</gene>